<proteinExistence type="evidence at transcript level"/>
<organism>
    <name type="scientific">Mus musculus</name>
    <name type="common">Mouse</name>
    <dbReference type="NCBI Taxonomy" id="10090"/>
    <lineage>
        <taxon>Eukaryota</taxon>
        <taxon>Metazoa</taxon>
        <taxon>Chordata</taxon>
        <taxon>Craniata</taxon>
        <taxon>Vertebrata</taxon>
        <taxon>Euteleostomi</taxon>
        <taxon>Mammalia</taxon>
        <taxon>Eutheria</taxon>
        <taxon>Euarchontoglires</taxon>
        <taxon>Glires</taxon>
        <taxon>Rodentia</taxon>
        <taxon>Myomorpha</taxon>
        <taxon>Muroidea</taxon>
        <taxon>Muridae</taxon>
        <taxon>Murinae</taxon>
        <taxon>Mus</taxon>
        <taxon>Mus</taxon>
    </lineage>
</organism>
<dbReference type="EMBL" id="AK038767">
    <property type="status" value="NOT_ANNOTATED_CDS"/>
    <property type="molecule type" value="mRNA"/>
</dbReference>
<dbReference type="EMBL" id="AC134623">
    <property type="status" value="NOT_ANNOTATED_CDS"/>
    <property type="molecule type" value="Genomic_DNA"/>
</dbReference>
<dbReference type="EMBL" id="CH466566">
    <property type="protein sequence ID" value="EDL22157.1"/>
    <property type="molecule type" value="Genomic_DNA"/>
</dbReference>
<dbReference type="CCDS" id="CCDS52489.1"/>
<dbReference type="RefSeq" id="NP_001094989.1">
    <property type="nucleotide sequence ID" value="NM_001101519.1"/>
</dbReference>
<dbReference type="SMR" id="G3UW36"/>
<dbReference type="STRING" id="10090.ENSMUSP00000127953"/>
<dbReference type="PaxDb" id="10090-ENSMUSP00000127953"/>
<dbReference type="Ensembl" id="ENSMUST00000166277.5">
    <property type="protein sequence ID" value="ENSMUSP00000127953.2"/>
    <property type="gene ID" value="ENSMUSG00000090336.6"/>
</dbReference>
<dbReference type="GeneID" id="403185"/>
<dbReference type="KEGG" id="mmu:403185"/>
<dbReference type="UCSC" id="uc009kyf.2">
    <property type="organism name" value="mouse"/>
</dbReference>
<dbReference type="AGR" id="MGI:2685952"/>
<dbReference type="CTD" id="101929355"/>
<dbReference type="MGI" id="MGI:2685952">
    <property type="gene designation" value="Cfap97d2"/>
</dbReference>
<dbReference type="VEuPathDB" id="HostDB:ENSMUSG00000090336"/>
<dbReference type="eggNOG" id="ENOG502S44E">
    <property type="taxonomic scope" value="Eukaryota"/>
</dbReference>
<dbReference type="GeneTree" id="ENSGT00940000164099"/>
<dbReference type="HOGENOM" id="CLU_163454_0_0_1"/>
<dbReference type="InParanoid" id="G3UW36"/>
<dbReference type="PhylomeDB" id="G3UW36"/>
<dbReference type="BioGRID-ORCS" id="403185">
    <property type="hits" value="1 hit in 78 CRISPR screens"/>
</dbReference>
<dbReference type="PRO" id="PR:G3UW36"/>
<dbReference type="Proteomes" id="UP000000589">
    <property type="component" value="Chromosome 8"/>
</dbReference>
<dbReference type="Bgee" id="ENSMUSG00000090336">
    <property type="expression patterns" value="Expressed in hypothalamus and 42 other cell types or tissues"/>
</dbReference>
<dbReference type="ExpressionAtlas" id="G3UW36">
    <property type="expression patterns" value="baseline and differential"/>
</dbReference>
<dbReference type="InterPro" id="IPR038792">
    <property type="entry name" value="CFAP97D1/2"/>
</dbReference>
<dbReference type="InterPro" id="IPR029488">
    <property type="entry name" value="Hmw/CFAP97"/>
</dbReference>
<dbReference type="PANTHER" id="PTHR33768:SF7">
    <property type="entry name" value="CFAP97 DOMAIN CONTAINING 2"/>
    <property type="match status" value="1"/>
</dbReference>
<dbReference type="PANTHER" id="PTHR33768">
    <property type="entry name" value="MIP11318P"/>
    <property type="match status" value="1"/>
</dbReference>
<dbReference type="Pfam" id="PF13879">
    <property type="entry name" value="Hmw_CFAP97"/>
    <property type="match status" value="1"/>
</dbReference>
<accession>G3UW36</accession>
<gene>
    <name evidence="3" type="primary">Cfap97d2</name>
</gene>
<keyword id="KW-1185">Reference proteome</keyword>
<sequence>MHRVPRLTTPWANRDLQRAWEKTYQDHRKKVQNAQPLVDTHPPQIYSHLCLKFKKLKMEEERLSIIDRNNYLLLQRVASAMKTRGQTDGRNNFTQRRS</sequence>
<evidence type="ECO:0000269" key="1">
    <source>
    </source>
</evidence>
<evidence type="ECO:0000305" key="2"/>
<evidence type="ECO:0000312" key="3">
    <source>
        <dbReference type="MGI" id="MGI:2685952"/>
    </source>
</evidence>
<reference key="1">
    <citation type="journal article" date="2005" name="Science">
        <title>The transcriptional landscape of the mammalian genome.</title>
        <authorList>
            <person name="Carninci P."/>
            <person name="Kasukawa T."/>
            <person name="Katayama S."/>
            <person name="Gough J."/>
            <person name="Frith M.C."/>
            <person name="Maeda N."/>
            <person name="Oyama R."/>
            <person name="Ravasi T."/>
            <person name="Lenhard B."/>
            <person name="Wells C."/>
            <person name="Kodzius R."/>
            <person name="Shimokawa K."/>
            <person name="Bajic V.B."/>
            <person name="Brenner S.E."/>
            <person name="Batalov S."/>
            <person name="Forrest A.R."/>
            <person name="Zavolan M."/>
            <person name="Davis M.J."/>
            <person name="Wilming L.G."/>
            <person name="Aidinis V."/>
            <person name="Allen J.E."/>
            <person name="Ambesi-Impiombato A."/>
            <person name="Apweiler R."/>
            <person name="Aturaliya R.N."/>
            <person name="Bailey T.L."/>
            <person name="Bansal M."/>
            <person name="Baxter L."/>
            <person name="Beisel K.W."/>
            <person name="Bersano T."/>
            <person name="Bono H."/>
            <person name="Chalk A.M."/>
            <person name="Chiu K.P."/>
            <person name="Choudhary V."/>
            <person name="Christoffels A."/>
            <person name="Clutterbuck D.R."/>
            <person name="Crowe M.L."/>
            <person name="Dalla E."/>
            <person name="Dalrymple B.P."/>
            <person name="de Bono B."/>
            <person name="Della Gatta G."/>
            <person name="di Bernardo D."/>
            <person name="Down T."/>
            <person name="Engstrom P."/>
            <person name="Fagiolini M."/>
            <person name="Faulkner G."/>
            <person name="Fletcher C.F."/>
            <person name="Fukushima T."/>
            <person name="Furuno M."/>
            <person name="Futaki S."/>
            <person name="Gariboldi M."/>
            <person name="Georgii-Hemming P."/>
            <person name="Gingeras T.R."/>
            <person name="Gojobori T."/>
            <person name="Green R.E."/>
            <person name="Gustincich S."/>
            <person name="Harbers M."/>
            <person name="Hayashi Y."/>
            <person name="Hensch T.K."/>
            <person name="Hirokawa N."/>
            <person name="Hill D."/>
            <person name="Huminiecki L."/>
            <person name="Iacono M."/>
            <person name="Ikeo K."/>
            <person name="Iwama A."/>
            <person name="Ishikawa T."/>
            <person name="Jakt M."/>
            <person name="Kanapin A."/>
            <person name="Katoh M."/>
            <person name="Kawasawa Y."/>
            <person name="Kelso J."/>
            <person name="Kitamura H."/>
            <person name="Kitano H."/>
            <person name="Kollias G."/>
            <person name="Krishnan S.P."/>
            <person name="Kruger A."/>
            <person name="Kummerfeld S.K."/>
            <person name="Kurochkin I.V."/>
            <person name="Lareau L.F."/>
            <person name="Lazarevic D."/>
            <person name="Lipovich L."/>
            <person name="Liu J."/>
            <person name="Liuni S."/>
            <person name="McWilliam S."/>
            <person name="Madan Babu M."/>
            <person name="Madera M."/>
            <person name="Marchionni L."/>
            <person name="Matsuda H."/>
            <person name="Matsuzawa S."/>
            <person name="Miki H."/>
            <person name="Mignone F."/>
            <person name="Miyake S."/>
            <person name="Morris K."/>
            <person name="Mottagui-Tabar S."/>
            <person name="Mulder N."/>
            <person name="Nakano N."/>
            <person name="Nakauchi H."/>
            <person name="Ng P."/>
            <person name="Nilsson R."/>
            <person name="Nishiguchi S."/>
            <person name="Nishikawa S."/>
            <person name="Nori F."/>
            <person name="Ohara O."/>
            <person name="Okazaki Y."/>
            <person name="Orlando V."/>
            <person name="Pang K.C."/>
            <person name="Pavan W.J."/>
            <person name="Pavesi G."/>
            <person name="Pesole G."/>
            <person name="Petrovsky N."/>
            <person name="Piazza S."/>
            <person name="Reed J."/>
            <person name="Reid J.F."/>
            <person name="Ring B.Z."/>
            <person name="Ringwald M."/>
            <person name="Rost B."/>
            <person name="Ruan Y."/>
            <person name="Salzberg S.L."/>
            <person name="Sandelin A."/>
            <person name="Schneider C."/>
            <person name="Schoenbach C."/>
            <person name="Sekiguchi K."/>
            <person name="Semple C.A."/>
            <person name="Seno S."/>
            <person name="Sessa L."/>
            <person name="Sheng Y."/>
            <person name="Shibata Y."/>
            <person name="Shimada H."/>
            <person name="Shimada K."/>
            <person name="Silva D."/>
            <person name="Sinclair B."/>
            <person name="Sperling S."/>
            <person name="Stupka E."/>
            <person name="Sugiura K."/>
            <person name="Sultana R."/>
            <person name="Takenaka Y."/>
            <person name="Taki K."/>
            <person name="Tammoja K."/>
            <person name="Tan S.L."/>
            <person name="Tang S."/>
            <person name="Taylor M.S."/>
            <person name="Tegner J."/>
            <person name="Teichmann S.A."/>
            <person name="Ueda H.R."/>
            <person name="van Nimwegen E."/>
            <person name="Verardo R."/>
            <person name="Wei C.L."/>
            <person name="Yagi K."/>
            <person name="Yamanishi H."/>
            <person name="Zabarovsky E."/>
            <person name="Zhu S."/>
            <person name="Zimmer A."/>
            <person name="Hide W."/>
            <person name="Bult C."/>
            <person name="Grimmond S.M."/>
            <person name="Teasdale R.D."/>
            <person name="Liu E.T."/>
            <person name="Brusic V."/>
            <person name="Quackenbush J."/>
            <person name="Wahlestedt C."/>
            <person name="Mattick J.S."/>
            <person name="Hume D.A."/>
            <person name="Kai C."/>
            <person name="Sasaki D."/>
            <person name="Tomaru Y."/>
            <person name="Fukuda S."/>
            <person name="Kanamori-Katayama M."/>
            <person name="Suzuki M."/>
            <person name="Aoki J."/>
            <person name="Arakawa T."/>
            <person name="Iida J."/>
            <person name="Imamura K."/>
            <person name="Itoh M."/>
            <person name="Kato T."/>
            <person name="Kawaji H."/>
            <person name="Kawagashira N."/>
            <person name="Kawashima T."/>
            <person name="Kojima M."/>
            <person name="Kondo S."/>
            <person name="Konno H."/>
            <person name="Nakano K."/>
            <person name="Ninomiya N."/>
            <person name="Nishio T."/>
            <person name="Okada M."/>
            <person name="Plessy C."/>
            <person name="Shibata K."/>
            <person name="Shiraki T."/>
            <person name="Suzuki S."/>
            <person name="Tagami M."/>
            <person name="Waki K."/>
            <person name="Watahiki A."/>
            <person name="Okamura-Oho Y."/>
            <person name="Suzuki H."/>
            <person name="Kawai J."/>
            <person name="Hayashizaki Y."/>
        </authorList>
    </citation>
    <scope>NUCLEOTIDE SEQUENCE [LARGE SCALE MRNA]</scope>
</reference>
<reference key="2">
    <citation type="journal article" date="2009" name="PLoS Biol.">
        <title>Lineage-specific biology revealed by a finished genome assembly of the mouse.</title>
        <authorList>
            <person name="Church D.M."/>
            <person name="Goodstadt L."/>
            <person name="Hillier L.W."/>
            <person name="Zody M.C."/>
            <person name="Goldstein S."/>
            <person name="She X."/>
            <person name="Bult C.J."/>
            <person name="Agarwala R."/>
            <person name="Cherry J.L."/>
            <person name="DiCuccio M."/>
            <person name="Hlavina W."/>
            <person name="Kapustin Y."/>
            <person name="Meric P."/>
            <person name="Maglott D."/>
            <person name="Birtle Z."/>
            <person name="Marques A.C."/>
            <person name="Graves T."/>
            <person name="Zhou S."/>
            <person name="Teague B."/>
            <person name="Potamousis K."/>
            <person name="Churas C."/>
            <person name="Place M."/>
            <person name="Herschleb J."/>
            <person name="Runnheim R."/>
            <person name="Forrest D."/>
            <person name="Amos-Landgraf J."/>
            <person name="Schwartz D.C."/>
            <person name="Cheng Z."/>
            <person name="Lindblad-Toh K."/>
            <person name="Eichler E.E."/>
            <person name="Ponting C.P."/>
        </authorList>
    </citation>
    <scope>NUCLEOTIDE SEQUENCE [LARGE SCALE GENOMIC DNA]</scope>
    <source>
        <strain>C57BL/6J</strain>
    </source>
</reference>
<reference key="3">
    <citation type="submission" date="2005-07" db="EMBL/GenBank/DDBJ databases">
        <authorList>
            <person name="Mural R.J."/>
            <person name="Adams M.D."/>
            <person name="Myers E.W."/>
            <person name="Smith H.O."/>
            <person name="Venter J.C."/>
        </authorList>
    </citation>
    <scope>NUCLEOTIDE SEQUENCE [LARGE SCALE GENOMIC DNA]</scope>
</reference>
<reference key="4">
    <citation type="journal article" date="2020" name="PLoS Genet.">
        <title>Cfap97d1 is important for flagellar axoneme maintenance and male mouse fertility.</title>
        <authorList>
            <person name="Oura S."/>
            <person name="Kazi S."/>
            <person name="Savolainen A."/>
            <person name="Nozawa K."/>
            <person name="Castaneda J."/>
            <person name="Yu Z."/>
            <person name="Miyata H."/>
            <person name="Matzuk R.M."/>
            <person name="Hansen J.N."/>
            <person name="Wachten D."/>
            <person name="Matzuk M.M."/>
            <person name="Prunskaite-Hyyrylaeinen R."/>
        </authorList>
    </citation>
    <scope>TISSUE SPECIFICITY</scope>
</reference>
<name>C97D2_MOUSE</name>
<feature type="chain" id="PRO_0000445067" description="Uncharacterized protein CFAP97D2">
    <location>
        <begin position="1"/>
        <end position="98"/>
    </location>
</feature>
<comment type="tissue specificity">
    <text evidence="1">Expressed in a number of tissues including brain, thymus, lung, heart, liver, spleen, kidney and testis.</text>
</comment>
<comment type="similarity">
    <text evidence="2">Belongs to the CFAP97 family.</text>
</comment>
<protein>
    <recommendedName>
        <fullName evidence="2">Uncharacterized protein CFAP97D2</fullName>
    </recommendedName>
    <alternativeName>
        <fullName evidence="2">CFAP97 domain-containing protein 2</fullName>
    </alternativeName>
</protein>